<accession>P9WHT2</accession>
<accession>L0T959</accession>
<accession>Q10401</accession>
<name>AMPA_MYCTO</name>
<evidence type="ECO:0000250" key="1"/>
<evidence type="ECO:0000255" key="2"/>
<evidence type="ECO:0000305" key="3"/>
<dbReference type="EC" id="3.4.11.1"/>
<dbReference type="EC" id="3.4.11.10"/>
<dbReference type="EMBL" id="AE000516">
    <property type="protein sequence ID" value="AAK46555.1"/>
    <property type="molecule type" value="Genomic_DNA"/>
</dbReference>
<dbReference type="PIR" id="F70786">
    <property type="entry name" value="F70786"/>
</dbReference>
<dbReference type="RefSeq" id="WP_003899220.1">
    <property type="nucleotide sequence ID" value="NZ_KK341227.1"/>
</dbReference>
<dbReference type="SMR" id="P9WHT2"/>
<dbReference type="KEGG" id="mtc:MT2269"/>
<dbReference type="PATRIC" id="fig|83331.31.peg.2444"/>
<dbReference type="HOGENOM" id="CLU_013734_2_2_11"/>
<dbReference type="Proteomes" id="UP000001020">
    <property type="component" value="Chromosome"/>
</dbReference>
<dbReference type="GO" id="GO:0005737">
    <property type="term" value="C:cytoplasm"/>
    <property type="evidence" value="ECO:0007669"/>
    <property type="project" value="UniProtKB-SubCell"/>
</dbReference>
<dbReference type="GO" id="GO:0030145">
    <property type="term" value="F:manganese ion binding"/>
    <property type="evidence" value="ECO:0007669"/>
    <property type="project" value="UniProtKB-UniRule"/>
</dbReference>
<dbReference type="GO" id="GO:0070006">
    <property type="term" value="F:metalloaminopeptidase activity"/>
    <property type="evidence" value="ECO:0007669"/>
    <property type="project" value="InterPro"/>
</dbReference>
<dbReference type="GO" id="GO:0006508">
    <property type="term" value="P:proteolysis"/>
    <property type="evidence" value="ECO:0007669"/>
    <property type="project" value="UniProtKB-KW"/>
</dbReference>
<dbReference type="CDD" id="cd00433">
    <property type="entry name" value="Peptidase_M17"/>
    <property type="match status" value="1"/>
</dbReference>
<dbReference type="FunFam" id="3.40.630.10:FF:000087">
    <property type="entry name" value="Probable cytosol aminopeptidase"/>
    <property type="match status" value="1"/>
</dbReference>
<dbReference type="Gene3D" id="3.40.220.10">
    <property type="entry name" value="Leucine Aminopeptidase, subunit E, domain 1"/>
    <property type="match status" value="1"/>
</dbReference>
<dbReference type="Gene3D" id="3.40.630.10">
    <property type="entry name" value="Zn peptidases"/>
    <property type="match status" value="1"/>
</dbReference>
<dbReference type="HAMAP" id="MF_00181">
    <property type="entry name" value="Cytosol_peptidase_M17"/>
    <property type="match status" value="1"/>
</dbReference>
<dbReference type="InterPro" id="IPR011356">
    <property type="entry name" value="Leucine_aapep/pepB"/>
</dbReference>
<dbReference type="InterPro" id="IPR043472">
    <property type="entry name" value="Macro_dom-like"/>
</dbReference>
<dbReference type="InterPro" id="IPR000819">
    <property type="entry name" value="Peptidase_M17_C"/>
</dbReference>
<dbReference type="InterPro" id="IPR023042">
    <property type="entry name" value="Peptidase_M17_leu_NH2_pept"/>
</dbReference>
<dbReference type="InterPro" id="IPR008283">
    <property type="entry name" value="Peptidase_M17_N"/>
</dbReference>
<dbReference type="NCBIfam" id="NF002073">
    <property type="entry name" value="PRK00913.1-2"/>
    <property type="match status" value="1"/>
</dbReference>
<dbReference type="PANTHER" id="PTHR11963:SF23">
    <property type="entry name" value="CYTOSOL AMINOPEPTIDASE"/>
    <property type="match status" value="1"/>
</dbReference>
<dbReference type="PANTHER" id="PTHR11963">
    <property type="entry name" value="LEUCINE AMINOPEPTIDASE-RELATED"/>
    <property type="match status" value="1"/>
</dbReference>
<dbReference type="Pfam" id="PF00883">
    <property type="entry name" value="Peptidase_M17"/>
    <property type="match status" value="1"/>
</dbReference>
<dbReference type="Pfam" id="PF02789">
    <property type="entry name" value="Peptidase_M17_N"/>
    <property type="match status" value="1"/>
</dbReference>
<dbReference type="PRINTS" id="PR00481">
    <property type="entry name" value="LAMNOPPTDASE"/>
</dbReference>
<dbReference type="SUPFAM" id="SSF52949">
    <property type="entry name" value="Macro domain-like"/>
    <property type="match status" value="1"/>
</dbReference>
<dbReference type="SUPFAM" id="SSF53187">
    <property type="entry name" value="Zn-dependent exopeptidases"/>
    <property type="match status" value="1"/>
</dbReference>
<dbReference type="PROSITE" id="PS00631">
    <property type="entry name" value="CYTOSOL_AP"/>
    <property type="match status" value="1"/>
</dbReference>
<keyword id="KW-0031">Aminopeptidase</keyword>
<keyword id="KW-0963">Cytoplasm</keyword>
<keyword id="KW-0378">Hydrolase</keyword>
<keyword id="KW-0464">Manganese</keyword>
<keyword id="KW-0479">Metal-binding</keyword>
<keyword id="KW-0645">Protease</keyword>
<keyword id="KW-1185">Reference proteome</keyword>
<reference key="1">
    <citation type="journal article" date="2002" name="J. Bacteriol.">
        <title>Whole-genome comparison of Mycobacterium tuberculosis clinical and laboratory strains.</title>
        <authorList>
            <person name="Fleischmann R.D."/>
            <person name="Alland D."/>
            <person name="Eisen J.A."/>
            <person name="Carpenter L."/>
            <person name="White O."/>
            <person name="Peterson J.D."/>
            <person name="DeBoy R.T."/>
            <person name="Dodson R.J."/>
            <person name="Gwinn M.L."/>
            <person name="Haft D.H."/>
            <person name="Hickey E.K."/>
            <person name="Kolonay J.F."/>
            <person name="Nelson W.C."/>
            <person name="Umayam L.A."/>
            <person name="Ermolaeva M.D."/>
            <person name="Salzberg S.L."/>
            <person name="Delcher A."/>
            <person name="Utterback T.R."/>
            <person name="Weidman J.F."/>
            <person name="Khouri H.M."/>
            <person name="Gill J."/>
            <person name="Mikula A."/>
            <person name="Bishai W."/>
            <person name="Jacobs W.R. Jr."/>
            <person name="Venter J.C."/>
            <person name="Fraser C.M."/>
        </authorList>
    </citation>
    <scope>NUCLEOTIDE SEQUENCE [LARGE SCALE GENOMIC DNA]</scope>
    <source>
        <strain>CDC 1551 / Oshkosh</strain>
    </source>
</reference>
<protein>
    <recommendedName>
        <fullName>Probable cytosol aminopeptidase</fullName>
        <ecNumber>3.4.11.1</ecNumber>
    </recommendedName>
    <alternativeName>
        <fullName>Leucine aminopeptidase</fullName>
        <shortName>LAP</shortName>
        <ecNumber>3.4.11.10</ecNumber>
    </alternativeName>
    <alternativeName>
        <fullName>Leucyl aminopeptidase</fullName>
    </alternativeName>
</protein>
<feature type="chain" id="PRO_0000428128" description="Probable cytosol aminopeptidase">
    <location>
        <begin position="1"/>
        <end position="515"/>
    </location>
</feature>
<feature type="active site" evidence="2">
    <location>
        <position position="291"/>
    </location>
</feature>
<feature type="active site" evidence="2">
    <location>
        <position position="365"/>
    </location>
</feature>
<feature type="binding site" evidence="1">
    <location>
        <position position="279"/>
    </location>
    <ligand>
        <name>Mn(2+)</name>
        <dbReference type="ChEBI" id="CHEBI:29035"/>
        <label>2</label>
    </ligand>
</feature>
<feature type="binding site" evidence="1">
    <location>
        <position position="284"/>
    </location>
    <ligand>
        <name>Mn(2+)</name>
        <dbReference type="ChEBI" id="CHEBI:29035"/>
        <label>1</label>
    </ligand>
</feature>
<feature type="binding site" evidence="1">
    <location>
        <position position="284"/>
    </location>
    <ligand>
        <name>Mn(2+)</name>
        <dbReference type="ChEBI" id="CHEBI:29035"/>
        <label>2</label>
    </ligand>
</feature>
<feature type="binding site" evidence="1">
    <location>
        <position position="302"/>
    </location>
    <ligand>
        <name>Mn(2+)</name>
        <dbReference type="ChEBI" id="CHEBI:29035"/>
        <label>2</label>
    </ligand>
</feature>
<feature type="binding site" evidence="1">
    <location>
        <position position="361"/>
    </location>
    <ligand>
        <name>Mn(2+)</name>
        <dbReference type="ChEBI" id="CHEBI:29035"/>
        <label>1</label>
    </ligand>
</feature>
<feature type="binding site" evidence="1">
    <location>
        <position position="363"/>
    </location>
    <ligand>
        <name>Mn(2+)</name>
        <dbReference type="ChEBI" id="CHEBI:29035"/>
        <label>1</label>
    </ligand>
</feature>
<feature type="binding site" evidence="1">
    <location>
        <position position="363"/>
    </location>
    <ligand>
        <name>Mn(2+)</name>
        <dbReference type="ChEBI" id="CHEBI:29035"/>
        <label>2</label>
    </ligand>
</feature>
<organism>
    <name type="scientific">Mycobacterium tuberculosis (strain CDC 1551 / Oshkosh)</name>
    <dbReference type="NCBI Taxonomy" id="83331"/>
    <lineage>
        <taxon>Bacteria</taxon>
        <taxon>Bacillati</taxon>
        <taxon>Actinomycetota</taxon>
        <taxon>Actinomycetes</taxon>
        <taxon>Mycobacteriales</taxon>
        <taxon>Mycobacteriaceae</taxon>
        <taxon>Mycobacterium</taxon>
        <taxon>Mycobacterium tuberculosis complex</taxon>
    </lineage>
</organism>
<sequence length="515" mass="53481">MTTEPGYLSPSVAVATSMPKRGVGAAVLIVPVVSTGEEDRPGAVVASAEPFLRADTVAEIEAGLRALDATGASDQVHRLAVPSLPVGSVLTVGLGKPRREWPADTIRCAAGVAARALNSSEAVITTLAELPGDGICSATVEGLILGSYRFSAFRSDKTAPKDAGLRKITVLCCAKDAKKRALHGAAVATAVATARDLVNTPPSHLFPAEFAKRAKTLSESVGLDVEVIDEKALKKAGYGGVIGVGQGSSRPPRLVRLIHRGSRLAKNPQKAKKVALVGKGITFDTGGISIKPAASMHHMTSDMGGAAAVIATVTLAARLRLPIDVIATVPMAENMPSATAQRPGDVLTQYGGTTVEVLNTDAEGRLILADAIVRACEDKPDYLIETSTLTGAQTVALGTRIPGVMGSDEFRDRVAAISQRVGENGWPMPLPDDLKDDLKSTVADLANVSGQRFAGMLVAGVFLREFVAESVDWAHIDVAGPAYNTGSAWGYTPKGATGVPTRTMFAVLEDIAKNG</sequence>
<comment type="function">
    <text evidence="1">Presumably involved in the processing and regular turnover of intracellular proteins. Catalyzes the removal of unsubstituted N-terminal amino acids from various peptides (By similarity).</text>
</comment>
<comment type="catalytic activity">
    <reaction>
        <text>Release of an N-terminal amino acid, Xaa-|-Yaa-, in which Xaa is preferably Leu, but may be other amino acids including Pro although not Arg or Lys, and Yaa may be Pro. Amino acid amides and methyl esters are also readily hydrolyzed, but rates on arylamides are exceedingly low.</text>
        <dbReference type="EC" id="3.4.11.1"/>
    </reaction>
</comment>
<comment type="catalytic activity">
    <reaction>
        <text>Release of an N-terminal amino acid, preferentially leucine, but not glutamic or aspartic acids.</text>
        <dbReference type="EC" id="3.4.11.10"/>
    </reaction>
</comment>
<comment type="cofactor">
    <cofactor evidence="1">
        <name>Mn(2+)</name>
        <dbReference type="ChEBI" id="CHEBI:29035"/>
    </cofactor>
    <text evidence="1">Binds 2 manganese ions per subunit.</text>
</comment>
<comment type="subcellular location">
    <subcellularLocation>
        <location evidence="1">Cytoplasm</location>
    </subcellularLocation>
</comment>
<comment type="similarity">
    <text evidence="3">Belongs to the peptidase M17 family.</text>
</comment>
<gene>
    <name type="primary">pepA</name>
    <name type="synonym">pepB</name>
    <name type="ordered locus">MT2269</name>
</gene>
<proteinExistence type="inferred from homology"/>